<gene>
    <name type="primary">Prph2</name>
    <name type="synonym">Rds</name>
</gene>
<comment type="function">
    <text evidence="6 7">Essential for retina photoreceptor outer segment disk morphogenesis, may also play a role with ROM1 in the maintenance of outer segment disk structure (PubMed:6715580). Required for the maintenance of retinal outer nuclear layer thickness (PubMed:29961824, PubMed:6715580). Required for the correct development and organization of the photoreceptor inner segment (PubMed:6715580).</text>
</comment>
<comment type="subunit">
    <text evidence="1 3 4 5 6">Homodimer; disulfide-linked (PubMed:29961824). Forms a homotetramer (PubMed:10802659). Forms a heterotetramer with ROM1 (PubMed:26406599, PubMed:29961824). Homotetramer and heterotetramer core complexes go on to form higher order complexes by formation of intermolecular disulfide bonds (By similarity). Interacts with MREG (PubMed:17260955). Interacts with STX3 isoform 3B (PubMed:26406599). Interacts with SNAP25 (PubMed:26406599).</text>
</comment>
<comment type="subcellular location">
    <subcellularLocation>
        <location evidence="1">Membrane</location>
        <topology evidence="2">Multi-pass membrane protein</topology>
    </subcellularLocation>
    <subcellularLocation>
        <location evidence="3 4 5 6">Cell projection</location>
        <location evidence="3 4 5 6">Cilium</location>
        <location evidence="3 4 5 6">Photoreceptor outer segment</location>
    </subcellularLocation>
    <subcellularLocation>
        <location evidence="4 5">Photoreceptor inner segment</location>
    </subcellularLocation>
</comment>
<comment type="tissue specificity">
    <text evidence="3 4 5 6">Expressed in the retina (at protein level).</text>
</comment>
<comment type="disease">
    <text evidence="8">Responsible for retinal degeneration slow (Rds) (PubMed:8530028).</text>
</comment>
<comment type="disruption phenotype">
    <text evidence="6 7">Knockout mice fail to form retinal disk structures, resulting in an absence of the photoreceptor outer segment (PubMed:6715580). At postnatal day 14 the photoreceptor inner segment is stunted and at postnatal day 21 shows disorganization and cell lysis in addition to outer nuclear layer degeneration resulting in a gradual decline in photoreceptors (PubMed:6715580). At postnatal day 21 mice show progressive thinning of the outer plexiform layer and disorganization of the photoreceptor synaptic termini (PubMed:6715580). Adult knockout mice show a reduction in the thickness of the retinal outer nuclear layer, and a decrease in Rom1 protein abundance in the retina (PubMed:29961824).</text>
</comment>
<comment type="similarity">
    <text evidence="9">Belongs to the PRPH2/ROM1 family.</text>
</comment>
<protein>
    <recommendedName>
        <fullName>Peripherin-2</fullName>
    </recommendedName>
    <alternativeName>
        <fullName>Retinal degeneration slow protein</fullName>
    </alternativeName>
</protein>
<organism>
    <name type="scientific">Mus musculus</name>
    <name type="common">Mouse</name>
    <dbReference type="NCBI Taxonomy" id="10090"/>
    <lineage>
        <taxon>Eukaryota</taxon>
        <taxon>Metazoa</taxon>
        <taxon>Chordata</taxon>
        <taxon>Craniata</taxon>
        <taxon>Vertebrata</taxon>
        <taxon>Euteleostomi</taxon>
        <taxon>Mammalia</taxon>
        <taxon>Eutheria</taxon>
        <taxon>Euarchontoglires</taxon>
        <taxon>Glires</taxon>
        <taxon>Rodentia</taxon>
        <taxon>Myomorpha</taxon>
        <taxon>Muroidea</taxon>
        <taxon>Muridae</taxon>
        <taxon>Murinae</taxon>
        <taxon>Mus</taxon>
        <taxon>Mus</taxon>
    </lineage>
</organism>
<sequence>MALLKVKFDQKKRVKLAQGLWLMNWLSVLAGIVLFSLGLFLKIELRKRSEVMNNSESHFVPNSLIGVGVLSCVFNSLAGKICYDALDPAKYAKWKPWLKPYLAVCIFFNVILFLVALCCFLLRGSLESTLAYGLKNGMKYYRDTDTPGRCFMKKTIDMLQIEFKCCGNNGFRDWFEIQWISNRYLDFSSKEVKDRIKSNVDGRYLVDGVPFSCCNPSSPRPCIQYQLTNNSAHYSYDHQTEELNLWLRGCRAALLNYYSSLMNSMGVVTLLVWLFEVSITAGLRYLHTALESVSNPEDPECESEGWLLEKSVPETWKAFLESFKKLGKSNQVEAEGADAGPAPEAG</sequence>
<feature type="chain" id="PRO_0000168106" description="Peripherin-2">
    <location>
        <begin position="1"/>
        <end position="346"/>
    </location>
</feature>
<feature type="topological domain" description="Cytoplasmic" evidence="2">
    <location>
        <begin position="1"/>
        <end position="24"/>
    </location>
</feature>
<feature type="transmembrane region" description="Helical" evidence="2">
    <location>
        <begin position="25"/>
        <end position="43"/>
    </location>
</feature>
<feature type="topological domain" description="Lumenal" evidence="2">
    <location>
        <begin position="44"/>
        <end position="61"/>
    </location>
</feature>
<feature type="transmembrane region" description="Helical" evidence="2">
    <location>
        <begin position="62"/>
        <end position="80"/>
    </location>
</feature>
<feature type="topological domain" description="Cytoplasmic" evidence="2">
    <location>
        <begin position="81"/>
        <end position="99"/>
    </location>
</feature>
<feature type="transmembrane region" description="Helical" evidence="2">
    <location>
        <begin position="100"/>
        <end position="123"/>
    </location>
</feature>
<feature type="topological domain" description="Lumenal" evidence="2">
    <location>
        <begin position="124"/>
        <end position="264"/>
    </location>
</feature>
<feature type="transmembrane region" description="Helical" evidence="2">
    <location>
        <begin position="265"/>
        <end position="290"/>
    </location>
</feature>
<feature type="topological domain" description="Cytoplasmic" evidence="2">
    <location>
        <begin position="291"/>
        <end position="346"/>
    </location>
</feature>
<feature type="region of interest" description="Interaction with MREG" evidence="4">
    <location>
        <begin position="341"/>
        <end position="346"/>
    </location>
</feature>
<feature type="glycosylation site" description="N-linked (GlcNAc...) asparagine" evidence="2">
    <location>
        <position position="53"/>
    </location>
</feature>
<feature type="glycosylation site" description="N-linked (GlcNAc...) asparagine" evidence="2">
    <location>
        <position position="229"/>
    </location>
</feature>
<feature type="disulfide bond" description="Interchain (with ROM1)" evidence="6">
    <location>
        <position position="150"/>
    </location>
</feature>
<feature type="mutagenesis site" description="Reduced cone and rod photoreceptor function as a result of outer segment malformation, including disorganization, short outer segments, and elongated disks which affect both rod and cone photoreceptors. Reduced Prph2 protein abundance in the retina." evidence="6">
    <original>Y</original>
    <variation>C</variation>
    <location>
        <position position="141"/>
    </location>
</feature>
<feature type="mutagenesis site" description="Reduced cone and rod photoreceptor function as a result of outer segment malformation, including disorganization, short outer segments, and elongated disks which affect both rod and cone photoreceptors. Reduced Prph2 and Rom1 protein abundance in the retina in addition to disruption of the formation of large disulfide-linked protein complexes." evidence="6">
    <original>C</original>
    <variation>S</variation>
    <location>
        <position position="150"/>
    </location>
</feature>
<proteinExistence type="evidence at protein level"/>
<evidence type="ECO:0000250" key="1">
    <source>
        <dbReference type="UniProtKB" id="P17810"/>
    </source>
</evidence>
<evidence type="ECO:0000255" key="2"/>
<evidence type="ECO:0000269" key="3">
    <source>
    </source>
</evidence>
<evidence type="ECO:0000269" key="4">
    <source>
    </source>
</evidence>
<evidence type="ECO:0000269" key="5">
    <source>
    </source>
</evidence>
<evidence type="ECO:0000269" key="6">
    <source>
    </source>
</evidence>
<evidence type="ECO:0000269" key="7">
    <source>
    </source>
</evidence>
<evidence type="ECO:0000269" key="8">
    <source>
    </source>
</evidence>
<evidence type="ECO:0000305" key="9"/>
<accession>P15499</accession>
<dbReference type="EMBL" id="X14770">
    <property type="protein sequence ID" value="CAA32878.1"/>
    <property type="molecule type" value="mRNA"/>
</dbReference>
<dbReference type="EMBL" id="BC028958">
    <property type="protein sequence ID" value="AAH28958.1"/>
    <property type="molecule type" value="mRNA"/>
</dbReference>
<dbReference type="EMBL" id="BC085266">
    <property type="protein sequence ID" value="AAH85266.1"/>
    <property type="molecule type" value="mRNA"/>
</dbReference>
<dbReference type="EMBL" id="L42167">
    <property type="protein sequence ID" value="AAC37674.1"/>
    <property type="molecule type" value="Genomic_DNA"/>
</dbReference>
<dbReference type="CCDS" id="CCDS28844.1"/>
<dbReference type="PIR" id="S03347">
    <property type="entry name" value="S03347"/>
</dbReference>
<dbReference type="RefSeq" id="NP_032964.1">
    <property type="nucleotide sequence ID" value="NM_008938.2"/>
</dbReference>
<dbReference type="SMR" id="P15499"/>
<dbReference type="BioGRID" id="202399">
    <property type="interactions" value="2"/>
</dbReference>
<dbReference type="FunCoup" id="P15499">
    <property type="interactions" value="85"/>
</dbReference>
<dbReference type="IntAct" id="P15499">
    <property type="interactions" value="1"/>
</dbReference>
<dbReference type="STRING" id="10090.ENSMUSP00000024773"/>
<dbReference type="GlyCosmos" id="P15499">
    <property type="glycosylation" value="2 sites, No reported glycans"/>
</dbReference>
<dbReference type="GlyGen" id="P15499">
    <property type="glycosylation" value="2 sites"/>
</dbReference>
<dbReference type="PhosphoSitePlus" id="P15499"/>
<dbReference type="PaxDb" id="10090-ENSMUSP00000024773"/>
<dbReference type="ProteomicsDB" id="291745"/>
<dbReference type="Antibodypedia" id="30169">
    <property type="antibodies" value="71 antibodies from 18 providers"/>
</dbReference>
<dbReference type="DNASU" id="19133"/>
<dbReference type="Ensembl" id="ENSMUST00000024773.6">
    <property type="protein sequence ID" value="ENSMUSP00000024773.6"/>
    <property type="gene ID" value="ENSMUSG00000023978.6"/>
</dbReference>
<dbReference type="GeneID" id="19133"/>
<dbReference type="KEGG" id="mmu:19133"/>
<dbReference type="UCSC" id="uc008cun.1">
    <property type="organism name" value="mouse"/>
</dbReference>
<dbReference type="AGR" id="MGI:102791"/>
<dbReference type="CTD" id="5961"/>
<dbReference type="MGI" id="MGI:102791">
    <property type="gene designation" value="Prph2"/>
</dbReference>
<dbReference type="VEuPathDB" id="HostDB:ENSMUSG00000023978"/>
<dbReference type="eggNOG" id="KOG3882">
    <property type="taxonomic scope" value="Eukaryota"/>
</dbReference>
<dbReference type="GeneTree" id="ENSGT00940000157303"/>
<dbReference type="HOGENOM" id="CLU_068903_0_0_1"/>
<dbReference type="InParanoid" id="P15499"/>
<dbReference type="OMA" id="LCCFLMR"/>
<dbReference type="OrthoDB" id="9836210at2759"/>
<dbReference type="PhylomeDB" id="P15499"/>
<dbReference type="TreeFam" id="TF331684"/>
<dbReference type="BioGRID-ORCS" id="19133">
    <property type="hits" value="1 hit in 76 CRISPR screens"/>
</dbReference>
<dbReference type="ChiTaRS" id="Prph2">
    <property type="organism name" value="mouse"/>
</dbReference>
<dbReference type="PRO" id="PR:P15499"/>
<dbReference type="Proteomes" id="UP000000589">
    <property type="component" value="Chromosome 17"/>
</dbReference>
<dbReference type="RNAct" id="P15499">
    <property type="molecule type" value="protein"/>
</dbReference>
<dbReference type="Bgee" id="ENSMUSG00000023978">
    <property type="expression patterns" value="Expressed in retinal neural layer and 7 other cell types or tissues"/>
</dbReference>
<dbReference type="ExpressionAtlas" id="P15499">
    <property type="expression patterns" value="baseline and differential"/>
</dbReference>
<dbReference type="GO" id="GO:0016020">
    <property type="term" value="C:membrane"/>
    <property type="evidence" value="ECO:0007669"/>
    <property type="project" value="UniProtKB-SubCell"/>
</dbReference>
<dbReference type="GO" id="GO:0001917">
    <property type="term" value="C:photoreceptor inner segment"/>
    <property type="evidence" value="ECO:0007669"/>
    <property type="project" value="UniProtKB-SubCell"/>
</dbReference>
<dbReference type="GO" id="GO:0001750">
    <property type="term" value="C:photoreceptor outer segment"/>
    <property type="evidence" value="ECO:0000314"/>
    <property type="project" value="MGI"/>
</dbReference>
<dbReference type="GO" id="GO:0042803">
    <property type="term" value="F:protein homodimerization activity"/>
    <property type="evidence" value="ECO:0000353"/>
    <property type="project" value="MGI"/>
</dbReference>
<dbReference type="GO" id="GO:0007155">
    <property type="term" value="P:cell adhesion"/>
    <property type="evidence" value="ECO:0007669"/>
    <property type="project" value="UniProtKB-KW"/>
</dbReference>
<dbReference type="GO" id="GO:0050908">
    <property type="term" value="P:detection of light stimulus involved in visual perception"/>
    <property type="evidence" value="ECO:0000315"/>
    <property type="project" value="MGI"/>
</dbReference>
<dbReference type="GO" id="GO:0035845">
    <property type="term" value="P:photoreceptor cell outer segment organization"/>
    <property type="evidence" value="ECO:0000315"/>
    <property type="project" value="MGI"/>
</dbReference>
<dbReference type="GO" id="GO:0051291">
    <property type="term" value="P:protein heterooligomerization"/>
    <property type="evidence" value="ECO:0000353"/>
    <property type="project" value="MGI"/>
</dbReference>
<dbReference type="GO" id="GO:0051260">
    <property type="term" value="P:protein homooligomerization"/>
    <property type="evidence" value="ECO:0000353"/>
    <property type="project" value="MGI"/>
</dbReference>
<dbReference type="GO" id="GO:0009645">
    <property type="term" value="P:response to low light intensity stimulus"/>
    <property type="evidence" value="ECO:0007669"/>
    <property type="project" value="Ensembl"/>
</dbReference>
<dbReference type="GO" id="GO:0060041">
    <property type="term" value="P:retina development in camera-type eye"/>
    <property type="evidence" value="ECO:0000315"/>
    <property type="project" value="MGI"/>
</dbReference>
<dbReference type="CDD" id="cd03162">
    <property type="entry name" value="peripherin_like_LEL"/>
    <property type="match status" value="1"/>
</dbReference>
<dbReference type="FunFam" id="1.10.1450.10:FF:000002">
    <property type="entry name" value="Retinal outer segment membrane protein 1"/>
    <property type="match status" value="1"/>
</dbReference>
<dbReference type="Gene3D" id="1.10.1450.10">
    <property type="entry name" value="Tetraspanin"/>
    <property type="match status" value="1"/>
</dbReference>
<dbReference type="InterPro" id="IPR000830">
    <property type="entry name" value="Peripherin/rom-1"/>
</dbReference>
<dbReference type="InterPro" id="IPR018498">
    <property type="entry name" value="Peripherin/rom-1_CS"/>
</dbReference>
<dbReference type="InterPro" id="IPR042026">
    <property type="entry name" value="Peripherin_LEL"/>
</dbReference>
<dbReference type="InterPro" id="IPR018499">
    <property type="entry name" value="Tetraspanin/Peripherin"/>
</dbReference>
<dbReference type="InterPro" id="IPR008952">
    <property type="entry name" value="Tetraspanin_EC2_sf"/>
</dbReference>
<dbReference type="PANTHER" id="PTHR19282:SF202">
    <property type="entry name" value="PERIPHERIN-2"/>
    <property type="match status" value="1"/>
</dbReference>
<dbReference type="PANTHER" id="PTHR19282">
    <property type="entry name" value="TETRASPANIN"/>
    <property type="match status" value="1"/>
</dbReference>
<dbReference type="Pfam" id="PF00335">
    <property type="entry name" value="Tetraspanin"/>
    <property type="match status" value="1"/>
</dbReference>
<dbReference type="PRINTS" id="PR00218">
    <property type="entry name" value="PERIPHERNRDS"/>
</dbReference>
<dbReference type="SUPFAM" id="SSF48652">
    <property type="entry name" value="Tetraspanin"/>
    <property type="match status" value="1"/>
</dbReference>
<dbReference type="PROSITE" id="PS00930">
    <property type="entry name" value="RDS_ROM1"/>
    <property type="match status" value="1"/>
</dbReference>
<reference key="1">
    <citation type="journal article" date="1989" name="Nature">
        <title>Identification of a photoreceptor-specific mRNA encoded by the gene responsible for retinal degeneration slow (rds).</title>
        <authorList>
            <person name="Travis G.H."/>
            <person name="Brennan M.B."/>
            <person name="Danielson P.E."/>
            <person name="Kozak C.A."/>
            <person name="Sutcliffe J.G."/>
        </authorList>
    </citation>
    <scope>NUCLEOTIDE SEQUENCE [MRNA]</scope>
    <source>
        <strain>C57BL/6J</strain>
        <tissue>Retina</tissue>
    </source>
</reference>
<reference key="2">
    <citation type="journal article" date="1991" name="Proc. Natl. Acad. Sci. U.S.A.">
        <title>Photoreceptor peripherin is the normal product of the gene responsible for retinal degeneration in the rds mouse.</title>
        <authorList>
            <person name="Connell G."/>
            <person name="Bascom R."/>
            <person name="Molday L."/>
            <person name="Reid D."/>
            <person name="McInnes R.R."/>
            <person name="Molday R.S."/>
        </authorList>
    </citation>
    <scope>NUCLEOTIDE SEQUENCE [MRNA]</scope>
    <scope>CHARACTERIZATION</scope>
</reference>
<reference key="3">
    <citation type="journal article" date="2004" name="Genome Res.">
        <title>The status, quality, and expansion of the NIH full-length cDNA project: the Mammalian Gene Collection (MGC).</title>
        <authorList>
            <consortium name="The MGC Project Team"/>
        </authorList>
    </citation>
    <scope>NUCLEOTIDE SEQUENCE [LARGE SCALE MRNA]</scope>
    <source>
        <strain>C57BL/6J</strain>
        <tissue>Retina</tissue>
    </source>
</reference>
<reference key="4">
    <citation type="journal article" date="1995" name="Genomics">
        <title>Retinal degeneration slow (rds) in mouse results from simple insertion of a t haplotype-specific element into protein-coding exon II.</title>
        <authorList>
            <person name="Ma J."/>
            <person name="Norton J.C."/>
            <person name="Allen A.C."/>
            <person name="Burns J.B."/>
            <person name="Hasel K.W."/>
            <person name="Burns J.L."/>
            <person name="Sutcliffe J.G."/>
            <person name="Travis G.H."/>
        </authorList>
    </citation>
    <scope>NUCLEOTIDE SEQUENCE [GENOMIC DNA] OF 1-229</scope>
</reference>
<reference key="5">
    <citation type="journal article" date="1984" name="J. Comp. Neurol.">
        <title>Development and degeneration of retina in rds mutant mice: electron microscopy.</title>
        <authorList>
            <person name="Jansen H.G."/>
            <person name="Sanyal S."/>
        </authorList>
    </citation>
    <scope>FUNCTION</scope>
    <scope>DISRUPTION PHENOTYPE</scope>
</reference>
<reference key="6">
    <citation type="journal article" date="2000" name="Nat. Genet.">
        <title>Rom-1 is required for rod photoreceptor viability and the regulation of disk morphogenesis.</title>
        <authorList>
            <person name="Clarke G."/>
            <person name="Goldberg A.F."/>
            <person name="Vidgen D."/>
            <person name="Collins L."/>
            <person name="Ploder L."/>
            <person name="Schwarz L."/>
            <person name="Molday L.L."/>
            <person name="Rossant J."/>
            <person name="Szel A."/>
            <person name="Molday R.S."/>
            <person name="Birch D.G."/>
            <person name="McInnes R.R."/>
        </authorList>
    </citation>
    <scope>SUBUNIT</scope>
    <scope>SUBCELLULAR LOCATION</scope>
    <scope>TISSUE SPECIFICITY</scope>
</reference>
<reference key="7">
    <citation type="journal article" date="2007" name="Biochemistry">
        <title>The tetraspanin protein peripherin-2 forms a complex with melanoregulin, a putative membrane fusion regulator.</title>
        <authorList>
            <person name="Boesze-Battaglia K."/>
            <person name="Song H."/>
            <person name="Sokolov M."/>
            <person name="Lillo C."/>
            <person name="Pankoski-Walker L."/>
            <person name="Gretzula C."/>
            <person name="Gallagher B."/>
            <person name="Rachel R.A."/>
            <person name="Jenkins N.A."/>
            <person name="Copeland N.G."/>
            <person name="Morris F."/>
            <person name="Jacob J."/>
            <person name="Yeagle P."/>
            <person name="Williams D.S."/>
            <person name="Damek-Poprawa M."/>
        </authorList>
    </citation>
    <scope>INTERACTION WITH MREG</scope>
    <scope>SUBCELLULAR LOCATION</scope>
    <scope>TISSUE SPECIFICITY</scope>
</reference>
<reference key="8">
    <citation type="journal article" date="2015" name="PLoS ONE">
        <title>SNAREs Interact with Retinal Degeneration Slow and Rod Outer Segment Membrane Protein-1 during Conventional and Unconventional Outer Segment Targeting.</title>
        <authorList>
            <person name="Zulliger R."/>
            <person name="Conley S.M."/>
            <person name="Mwoyosvi M.L."/>
            <person name="Stuck M.W."/>
            <person name="Azadi S."/>
            <person name="Naash M.I."/>
        </authorList>
    </citation>
    <scope>INTERACTION WITH ROM1; STX3 AND SNAP25</scope>
    <scope>SUBCELLULAR LOCATION</scope>
    <scope>TISSUE SPECIFICITY</scope>
</reference>
<reference key="9">
    <citation type="journal article" date="2018" name="Hum. Mol. Genet.">
        <title>Oligomerization of Prph2 and Rom1 is essential for photoreceptor outer segment formation.</title>
        <authorList>
            <person name="Zulliger R."/>
            <person name="Conley S.M."/>
            <person name="Mwoyosvi M.L."/>
            <person name="Al-Ubaidi M.R."/>
            <person name="Naash M.I."/>
        </authorList>
    </citation>
    <scope>FUNCTION</scope>
    <scope>SUBUNIT</scope>
    <scope>INTERACTION WITH ROM1</scope>
    <scope>SUBCELLULAR LOCATION</scope>
    <scope>TISSUE SPECIFICITY</scope>
    <scope>DISRUPTION PHENOTYPE</scope>
    <scope>DISUPLHIDE BOND</scope>
    <scope>MUTAGENESIS OF TYR-141 AND CYS-150</scope>
</reference>
<keyword id="KW-0130">Cell adhesion</keyword>
<keyword id="KW-0966">Cell projection</keyword>
<keyword id="KW-1015">Disulfide bond</keyword>
<keyword id="KW-0325">Glycoprotein</keyword>
<keyword id="KW-0472">Membrane</keyword>
<keyword id="KW-1185">Reference proteome</keyword>
<keyword id="KW-0716">Sensory transduction</keyword>
<keyword id="KW-0812">Transmembrane</keyword>
<keyword id="KW-1133">Transmembrane helix</keyword>
<keyword id="KW-0844">Vision</keyword>
<name>PRPH2_MOUSE</name>